<dbReference type="EC" id="6.1.1.5" evidence="1"/>
<dbReference type="EMBL" id="BA000021">
    <property type="protein sequence ID" value="BAC24440.1"/>
    <property type="molecule type" value="Genomic_DNA"/>
</dbReference>
<dbReference type="SMR" id="Q8D2R0"/>
<dbReference type="STRING" id="36870.gene:10368787"/>
<dbReference type="KEGG" id="wbr:ileS"/>
<dbReference type="eggNOG" id="COG0060">
    <property type="taxonomic scope" value="Bacteria"/>
</dbReference>
<dbReference type="HOGENOM" id="CLU_001493_7_0_6"/>
<dbReference type="Proteomes" id="UP000000562">
    <property type="component" value="Chromosome"/>
</dbReference>
<dbReference type="GO" id="GO:0005829">
    <property type="term" value="C:cytosol"/>
    <property type="evidence" value="ECO:0007669"/>
    <property type="project" value="TreeGrafter"/>
</dbReference>
<dbReference type="GO" id="GO:0002161">
    <property type="term" value="F:aminoacyl-tRNA deacylase activity"/>
    <property type="evidence" value="ECO:0007669"/>
    <property type="project" value="InterPro"/>
</dbReference>
<dbReference type="GO" id="GO:0005524">
    <property type="term" value="F:ATP binding"/>
    <property type="evidence" value="ECO:0007669"/>
    <property type="project" value="UniProtKB-UniRule"/>
</dbReference>
<dbReference type="GO" id="GO:0004822">
    <property type="term" value="F:isoleucine-tRNA ligase activity"/>
    <property type="evidence" value="ECO:0007669"/>
    <property type="project" value="UniProtKB-UniRule"/>
</dbReference>
<dbReference type="GO" id="GO:0000049">
    <property type="term" value="F:tRNA binding"/>
    <property type="evidence" value="ECO:0007669"/>
    <property type="project" value="InterPro"/>
</dbReference>
<dbReference type="GO" id="GO:0008270">
    <property type="term" value="F:zinc ion binding"/>
    <property type="evidence" value="ECO:0007669"/>
    <property type="project" value="UniProtKB-UniRule"/>
</dbReference>
<dbReference type="GO" id="GO:0006428">
    <property type="term" value="P:isoleucyl-tRNA aminoacylation"/>
    <property type="evidence" value="ECO:0007669"/>
    <property type="project" value="UniProtKB-UniRule"/>
</dbReference>
<dbReference type="CDD" id="cd07960">
    <property type="entry name" value="Anticodon_Ia_Ile_BEm"/>
    <property type="match status" value="1"/>
</dbReference>
<dbReference type="CDD" id="cd00818">
    <property type="entry name" value="IleRS_core"/>
    <property type="match status" value="1"/>
</dbReference>
<dbReference type="FunFam" id="1.10.730.20:FF:000001">
    <property type="entry name" value="Isoleucine--tRNA ligase"/>
    <property type="match status" value="1"/>
</dbReference>
<dbReference type="FunFam" id="3.40.50.620:FF:000042">
    <property type="entry name" value="Isoleucine--tRNA ligase"/>
    <property type="match status" value="1"/>
</dbReference>
<dbReference type="FunFam" id="3.40.50.620:FF:000048">
    <property type="entry name" value="Isoleucine--tRNA ligase"/>
    <property type="match status" value="1"/>
</dbReference>
<dbReference type="Gene3D" id="1.10.730.20">
    <property type="match status" value="1"/>
</dbReference>
<dbReference type="Gene3D" id="3.40.50.620">
    <property type="entry name" value="HUPs"/>
    <property type="match status" value="2"/>
</dbReference>
<dbReference type="Gene3D" id="3.90.740.10">
    <property type="entry name" value="Valyl/Leucyl/Isoleucyl-tRNA synthetase, editing domain"/>
    <property type="match status" value="1"/>
</dbReference>
<dbReference type="HAMAP" id="MF_02002">
    <property type="entry name" value="Ile_tRNA_synth_type1"/>
    <property type="match status" value="1"/>
</dbReference>
<dbReference type="InterPro" id="IPR001412">
    <property type="entry name" value="aa-tRNA-synth_I_CS"/>
</dbReference>
<dbReference type="InterPro" id="IPR002300">
    <property type="entry name" value="aa-tRNA-synth_Ia"/>
</dbReference>
<dbReference type="InterPro" id="IPR033708">
    <property type="entry name" value="Anticodon_Ile_BEm"/>
</dbReference>
<dbReference type="InterPro" id="IPR002301">
    <property type="entry name" value="Ile-tRNA-ligase"/>
</dbReference>
<dbReference type="InterPro" id="IPR023585">
    <property type="entry name" value="Ile-tRNA-ligase_type1"/>
</dbReference>
<dbReference type="InterPro" id="IPR050081">
    <property type="entry name" value="Ile-tRNA_ligase"/>
</dbReference>
<dbReference type="InterPro" id="IPR013155">
    <property type="entry name" value="M/V/L/I-tRNA-synth_anticd-bd"/>
</dbReference>
<dbReference type="InterPro" id="IPR014729">
    <property type="entry name" value="Rossmann-like_a/b/a_fold"/>
</dbReference>
<dbReference type="InterPro" id="IPR009080">
    <property type="entry name" value="tRNAsynth_Ia_anticodon-bd"/>
</dbReference>
<dbReference type="InterPro" id="IPR009008">
    <property type="entry name" value="Val/Leu/Ile-tRNA-synth_edit"/>
</dbReference>
<dbReference type="InterPro" id="IPR010663">
    <property type="entry name" value="Znf_FPG/IleRS"/>
</dbReference>
<dbReference type="NCBIfam" id="TIGR00392">
    <property type="entry name" value="ileS"/>
    <property type="match status" value="1"/>
</dbReference>
<dbReference type="PANTHER" id="PTHR42765:SF1">
    <property type="entry name" value="ISOLEUCINE--TRNA LIGASE, MITOCHONDRIAL"/>
    <property type="match status" value="1"/>
</dbReference>
<dbReference type="PANTHER" id="PTHR42765">
    <property type="entry name" value="SOLEUCYL-TRNA SYNTHETASE"/>
    <property type="match status" value="1"/>
</dbReference>
<dbReference type="Pfam" id="PF08264">
    <property type="entry name" value="Anticodon_1"/>
    <property type="match status" value="1"/>
</dbReference>
<dbReference type="Pfam" id="PF00133">
    <property type="entry name" value="tRNA-synt_1"/>
    <property type="match status" value="1"/>
</dbReference>
<dbReference type="Pfam" id="PF06827">
    <property type="entry name" value="zf-FPG_IleRS"/>
    <property type="match status" value="1"/>
</dbReference>
<dbReference type="PRINTS" id="PR00984">
    <property type="entry name" value="TRNASYNTHILE"/>
</dbReference>
<dbReference type="SUPFAM" id="SSF47323">
    <property type="entry name" value="Anticodon-binding domain of a subclass of class I aminoacyl-tRNA synthetases"/>
    <property type="match status" value="1"/>
</dbReference>
<dbReference type="SUPFAM" id="SSF52374">
    <property type="entry name" value="Nucleotidylyl transferase"/>
    <property type="match status" value="1"/>
</dbReference>
<dbReference type="SUPFAM" id="SSF50677">
    <property type="entry name" value="ValRS/IleRS/LeuRS editing domain"/>
    <property type="match status" value="1"/>
</dbReference>
<dbReference type="PROSITE" id="PS00178">
    <property type="entry name" value="AA_TRNA_LIGASE_I"/>
    <property type="match status" value="1"/>
</dbReference>
<organism>
    <name type="scientific">Wigglesworthia glossinidia brevipalpis</name>
    <dbReference type="NCBI Taxonomy" id="36870"/>
    <lineage>
        <taxon>Bacteria</taxon>
        <taxon>Pseudomonadati</taxon>
        <taxon>Pseudomonadota</taxon>
        <taxon>Gammaproteobacteria</taxon>
        <taxon>Enterobacterales</taxon>
        <taxon>Erwiniaceae</taxon>
        <taxon>Wigglesworthia</taxon>
    </lineage>
</organism>
<keyword id="KW-0030">Aminoacyl-tRNA synthetase</keyword>
<keyword id="KW-0067">ATP-binding</keyword>
<keyword id="KW-0963">Cytoplasm</keyword>
<keyword id="KW-0436">Ligase</keyword>
<keyword id="KW-0479">Metal-binding</keyword>
<keyword id="KW-0547">Nucleotide-binding</keyword>
<keyword id="KW-0648">Protein biosynthesis</keyword>
<keyword id="KW-1185">Reference proteome</keyword>
<keyword id="KW-0862">Zinc</keyword>
<accession>Q8D2R0</accession>
<protein>
    <recommendedName>
        <fullName evidence="1">Isoleucine--tRNA ligase</fullName>
        <ecNumber evidence="1">6.1.1.5</ecNumber>
    </recommendedName>
    <alternativeName>
        <fullName evidence="1">Isoleucyl-tRNA synthetase</fullName>
        <shortName evidence="1">IleRS</shortName>
    </alternativeName>
</protein>
<sequence>MMNDYKNTLNLPKTKFPMKANLLISELKILECWKKNNLYSIIRENKKGKKTFFLHDGPPYANGDIHIGHAVNKILKDIIIKFKSLFGFDAPYMPGWDCHGLPIELQVEKKINQNINKINHKIFREKCRNYALDQVNKQKKEFIRLGVIGDWNNPYLTMDFHTEANILRTFKNLIKKKYLYRGIKPINWCIDCKSSLSDSEIDYNIKESNSIDVSFSACDNNKILKIFNSEKKFDKIKAIIWTTTPWTIIANRAISVNPNFIYLLVKCNKEIFIIAESLLDKTLARLNIKKSKILGSVYGKKLKFLYFKHPLNKIHVPMILNEYVDFKSGSGIVHVAPNYGEEDYIIGKKYKLNMYDPIDSNGNYLPGTFPGLDGLNIFKSEEVVLNLLKNNHSLYSKKIINHSYPHCWRHKSPTFFRATNQWFFNIDNNNLRNKTISEIKKILWIPKWGMNQIIDLLSNRPDWCISRQRVWGVPIAVFINKKNKEIHPNTVELIEKVSKKIEKKGVQAWWDINKSEILDKDSDKYKKVLDTLDVWFDSGSTYYSILIKKWNSLNKNKVDLYLEGSDQYRGWFMSSIILSIAITGGIPCKKILAHGFVVDSNGKKMSKSIGNVISPKDIINEFGADILRLWVASSDYKSDISISKEILLRTVDIYRRIRNTSRFLLSNLNDFNPEFNSINLENMLSIDQWAIIKTNNRQKKIKNAYEEYNFHKVVSNIVDFCSLDMGSFYLDIIKDRQYTNYIDSLARRSCQTAILYIIECLVRWIMPILSFTSHEIWKYIPGKREKYVFLSEWVKEIPCENINSYISKSLWKILIKIKNEINKIIEIKKLEDKIKSSLELKITLYAESFIFEELILLKKELNFAFLVSYVSIKKYENSKENAFKSKSIKNLKILAEKFDGKKCLRCWNYTNDIVNDVKYNKICNRCINNINGVEEKRKYF</sequence>
<reference key="1">
    <citation type="journal article" date="2002" name="Nat. Genet.">
        <title>Genome sequence of the endocellular obligate symbiont of tsetse flies, Wigglesworthia glossinidia.</title>
        <authorList>
            <person name="Akman L."/>
            <person name="Yamashita A."/>
            <person name="Watanabe H."/>
            <person name="Oshima K."/>
            <person name="Shiba T."/>
            <person name="Hattori M."/>
            <person name="Aksoy S."/>
        </authorList>
    </citation>
    <scope>NUCLEOTIDE SEQUENCE [LARGE SCALE GENOMIC DNA]</scope>
</reference>
<name>SYI_WIGBR</name>
<evidence type="ECO:0000255" key="1">
    <source>
        <dbReference type="HAMAP-Rule" id="MF_02002"/>
    </source>
</evidence>
<proteinExistence type="inferred from homology"/>
<feature type="chain" id="PRO_0000098502" description="Isoleucine--tRNA ligase">
    <location>
        <begin position="1"/>
        <end position="940"/>
    </location>
</feature>
<feature type="short sequence motif" description="'HIGH' region">
    <location>
        <begin position="59"/>
        <end position="69"/>
    </location>
</feature>
<feature type="short sequence motif" description="'KMSKS' region">
    <location>
        <begin position="604"/>
        <end position="608"/>
    </location>
</feature>
<feature type="binding site" evidence="1">
    <location>
        <position position="563"/>
    </location>
    <ligand>
        <name>L-isoleucyl-5'-AMP</name>
        <dbReference type="ChEBI" id="CHEBI:178002"/>
    </ligand>
</feature>
<feature type="binding site" evidence="1">
    <location>
        <position position="607"/>
    </location>
    <ligand>
        <name>ATP</name>
        <dbReference type="ChEBI" id="CHEBI:30616"/>
    </ligand>
</feature>
<feature type="binding site" evidence="1">
    <location>
        <position position="903"/>
    </location>
    <ligand>
        <name>Zn(2+)</name>
        <dbReference type="ChEBI" id="CHEBI:29105"/>
    </ligand>
</feature>
<feature type="binding site" evidence="1">
    <location>
        <position position="906"/>
    </location>
    <ligand>
        <name>Zn(2+)</name>
        <dbReference type="ChEBI" id="CHEBI:29105"/>
    </ligand>
</feature>
<feature type="binding site" evidence="1">
    <location>
        <position position="923"/>
    </location>
    <ligand>
        <name>Zn(2+)</name>
        <dbReference type="ChEBI" id="CHEBI:29105"/>
    </ligand>
</feature>
<feature type="binding site" evidence="1">
    <location>
        <position position="926"/>
    </location>
    <ligand>
        <name>Zn(2+)</name>
        <dbReference type="ChEBI" id="CHEBI:29105"/>
    </ligand>
</feature>
<comment type="function">
    <text evidence="1">Catalyzes the attachment of isoleucine to tRNA(Ile). As IleRS can inadvertently accommodate and process structurally similar amino acids such as valine, to avoid such errors it has two additional distinct tRNA(Ile)-dependent editing activities. One activity is designated as 'pretransfer' editing and involves the hydrolysis of activated Val-AMP. The other activity is designated 'posttransfer' editing and involves deacylation of mischarged Val-tRNA(Ile).</text>
</comment>
<comment type="catalytic activity">
    <reaction evidence="1">
        <text>tRNA(Ile) + L-isoleucine + ATP = L-isoleucyl-tRNA(Ile) + AMP + diphosphate</text>
        <dbReference type="Rhea" id="RHEA:11060"/>
        <dbReference type="Rhea" id="RHEA-COMP:9666"/>
        <dbReference type="Rhea" id="RHEA-COMP:9695"/>
        <dbReference type="ChEBI" id="CHEBI:30616"/>
        <dbReference type="ChEBI" id="CHEBI:33019"/>
        <dbReference type="ChEBI" id="CHEBI:58045"/>
        <dbReference type="ChEBI" id="CHEBI:78442"/>
        <dbReference type="ChEBI" id="CHEBI:78528"/>
        <dbReference type="ChEBI" id="CHEBI:456215"/>
        <dbReference type="EC" id="6.1.1.5"/>
    </reaction>
</comment>
<comment type="cofactor">
    <cofactor evidence="1">
        <name>Zn(2+)</name>
        <dbReference type="ChEBI" id="CHEBI:29105"/>
    </cofactor>
    <text evidence="1">Binds 1 zinc ion per subunit.</text>
</comment>
<comment type="subunit">
    <text evidence="1">Monomer.</text>
</comment>
<comment type="subcellular location">
    <subcellularLocation>
        <location evidence="1">Cytoplasm</location>
    </subcellularLocation>
</comment>
<comment type="domain">
    <text evidence="1">IleRS has two distinct active sites: one for aminoacylation and one for editing. The misactivated valine is translocated from the active site to the editing site, which sterically excludes the correctly activated isoleucine. The single editing site contains two valyl binding pockets, one specific for each substrate (Val-AMP or Val-tRNA(Ile)).</text>
</comment>
<comment type="similarity">
    <text evidence="1">Belongs to the class-I aminoacyl-tRNA synthetase family. IleS type 1 subfamily.</text>
</comment>
<gene>
    <name evidence="1" type="primary">ileS</name>
    <name type="ordered locus">WIGBR2940</name>
</gene>